<name>Y334_BUCBP</name>
<accession>Q89AG0</accession>
<dbReference type="EMBL" id="AE016826">
    <property type="protein sequence ID" value="AAO27055.1"/>
    <property type="molecule type" value="Genomic_DNA"/>
</dbReference>
<dbReference type="RefSeq" id="WP_011091456.1">
    <property type="nucleotide sequence ID" value="NC_004545.1"/>
</dbReference>
<dbReference type="SMR" id="Q89AG0"/>
<dbReference type="STRING" id="224915.bbp_334"/>
<dbReference type="KEGG" id="bab:bbp_334"/>
<dbReference type="eggNOG" id="COG0251">
    <property type="taxonomic scope" value="Bacteria"/>
</dbReference>
<dbReference type="HOGENOM" id="CLU_100715_7_3_6"/>
<dbReference type="OrthoDB" id="9803101at2"/>
<dbReference type="Proteomes" id="UP000000601">
    <property type="component" value="Chromosome"/>
</dbReference>
<dbReference type="GO" id="GO:0005829">
    <property type="term" value="C:cytosol"/>
    <property type="evidence" value="ECO:0007669"/>
    <property type="project" value="TreeGrafter"/>
</dbReference>
<dbReference type="GO" id="GO:0019239">
    <property type="term" value="F:deaminase activity"/>
    <property type="evidence" value="ECO:0007669"/>
    <property type="project" value="TreeGrafter"/>
</dbReference>
<dbReference type="CDD" id="cd00448">
    <property type="entry name" value="YjgF_YER057c_UK114_family"/>
    <property type="match status" value="1"/>
</dbReference>
<dbReference type="FunFam" id="3.30.1330.40:FF:000001">
    <property type="entry name" value="L-PSP family endoribonuclease"/>
    <property type="match status" value="1"/>
</dbReference>
<dbReference type="Gene3D" id="3.30.1330.40">
    <property type="entry name" value="RutC-like"/>
    <property type="match status" value="1"/>
</dbReference>
<dbReference type="InterPro" id="IPR006056">
    <property type="entry name" value="RidA"/>
</dbReference>
<dbReference type="InterPro" id="IPR019897">
    <property type="entry name" value="RidA_CS"/>
</dbReference>
<dbReference type="InterPro" id="IPR035959">
    <property type="entry name" value="RutC-like_sf"/>
</dbReference>
<dbReference type="InterPro" id="IPR006175">
    <property type="entry name" value="YjgF/YER057c/UK114"/>
</dbReference>
<dbReference type="NCBIfam" id="TIGR00004">
    <property type="entry name" value="Rid family detoxifying hydrolase"/>
    <property type="match status" value="1"/>
</dbReference>
<dbReference type="PANTHER" id="PTHR11803">
    <property type="entry name" value="2-IMINOBUTANOATE/2-IMINOPROPANOATE DEAMINASE RIDA"/>
    <property type="match status" value="1"/>
</dbReference>
<dbReference type="PANTHER" id="PTHR11803:SF39">
    <property type="entry name" value="2-IMINOBUTANOATE_2-IMINOPROPANOATE DEAMINASE"/>
    <property type="match status" value="1"/>
</dbReference>
<dbReference type="Pfam" id="PF01042">
    <property type="entry name" value="Ribonuc_L-PSP"/>
    <property type="match status" value="1"/>
</dbReference>
<dbReference type="SUPFAM" id="SSF55298">
    <property type="entry name" value="YjgF-like"/>
    <property type="match status" value="1"/>
</dbReference>
<dbReference type="PROSITE" id="PS01094">
    <property type="entry name" value="UPF0076"/>
    <property type="match status" value="1"/>
</dbReference>
<gene>
    <name type="ordered locus">bbp_334</name>
</gene>
<comment type="similarity">
    <text evidence="1">Belongs to the RutC family.</text>
</comment>
<organism>
    <name type="scientific">Buchnera aphidicola subsp. Baizongia pistaciae (strain Bp)</name>
    <dbReference type="NCBI Taxonomy" id="224915"/>
    <lineage>
        <taxon>Bacteria</taxon>
        <taxon>Pseudomonadati</taxon>
        <taxon>Pseudomonadota</taxon>
        <taxon>Gammaproteobacteria</taxon>
        <taxon>Enterobacterales</taxon>
        <taxon>Erwiniaceae</taxon>
        <taxon>Buchnera</taxon>
    </lineage>
</organism>
<protein>
    <recommendedName>
        <fullName>RutC family protein bbp_334</fullName>
    </recommendedName>
</protein>
<feature type="chain" id="PRO_0000170333" description="RutC family protein bbp_334">
    <location>
        <begin position="1"/>
        <end position="126"/>
    </location>
</feature>
<evidence type="ECO:0000305" key="1"/>
<keyword id="KW-1185">Reference proteome</keyword>
<sequence length="126" mass="14401">MIKEIHTHKSPKPIGPYSQAIQIKNFTFLSGQISQTDNINTNISFQTQSILQNINYILESKEMNVGNIVKTTIFITNLNDLTIVNDVYQKFFLKYTKTFPARSCVEVSKLPKNAKIEIDAIAYKNK</sequence>
<proteinExistence type="inferred from homology"/>
<reference key="1">
    <citation type="journal article" date="2003" name="Proc. Natl. Acad. Sci. U.S.A.">
        <title>Reductive genome evolution in Buchnera aphidicola.</title>
        <authorList>
            <person name="van Ham R.C.H.J."/>
            <person name="Kamerbeek J."/>
            <person name="Palacios C."/>
            <person name="Rausell C."/>
            <person name="Abascal F."/>
            <person name="Bastolla U."/>
            <person name="Fernandez J.M."/>
            <person name="Jimenez L."/>
            <person name="Postigo M."/>
            <person name="Silva F.J."/>
            <person name="Tamames J."/>
            <person name="Viguera E."/>
            <person name="Latorre A."/>
            <person name="Valencia A."/>
            <person name="Moran F."/>
            <person name="Moya A."/>
        </authorList>
    </citation>
    <scope>NUCLEOTIDE SEQUENCE [LARGE SCALE GENOMIC DNA]</scope>
    <source>
        <strain>Bp</strain>
    </source>
</reference>